<feature type="chain" id="PRO_0000054024" description="Potassium voltage-gated channel subfamily KQT member 1">
    <location>
        <begin position="1"/>
        <end position="668"/>
    </location>
</feature>
<feature type="topological domain" description="Cytoplasmic" evidence="13">
    <location>
        <begin position="1"/>
        <end position="119"/>
    </location>
</feature>
<feature type="transmembrane region" description="Helical; Name=Segment S1" evidence="1">
    <location>
        <begin position="120"/>
        <end position="141"/>
    </location>
</feature>
<feature type="topological domain" description="Extracellular" evidence="13">
    <location>
        <begin position="142"/>
        <end position="152"/>
    </location>
</feature>
<feature type="transmembrane region" description="Helical; Name=Segment S2" evidence="1">
    <location>
        <begin position="153"/>
        <end position="175"/>
    </location>
</feature>
<feature type="topological domain" description="Cytoplasmic" evidence="13">
    <location>
        <begin position="176"/>
        <end position="191"/>
    </location>
</feature>
<feature type="transmembrane region" description="Helical; Name=Segment S3" evidence="1">
    <location>
        <begin position="192"/>
        <end position="217"/>
    </location>
</feature>
<feature type="topological domain" description="Extracellular" evidence="13">
    <location>
        <begin position="218"/>
        <end position="225"/>
    </location>
</feature>
<feature type="transmembrane region" description="Helical; Voltage-sensor; Name=Segment S4" evidence="1">
    <location>
        <begin position="226"/>
        <end position="241"/>
    </location>
</feature>
<feature type="topological domain" description="Cytoplasmic" evidence="13">
    <location>
        <begin position="242"/>
        <end position="259"/>
    </location>
</feature>
<feature type="transmembrane region" description="Helical; Name=Segment S5" evidence="1">
    <location>
        <begin position="260"/>
        <end position="282"/>
    </location>
</feature>
<feature type="topological domain" description="Extracellular" evidence="13">
    <location>
        <begin position="283"/>
        <end position="298"/>
    </location>
</feature>
<feature type="intramembrane region" description="Pore-forming; Name=Segment H5" evidence="1">
    <location>
        <begin position="299"/>
        <end position="319"/>
    </location>
</feature>
<feature type="topological domain" description="Extracellular" evidence="13">
    <location>
        <begin position="320"/>
        <end position="321"/>
    </location>
</feature>
<feature type="transmembrane region" description="Helical; Name=Segment S6" evidence="1">
    <location>
        <begin position="322"/>
        <end position="347"/>
    </location>
</feature>
<feature type="topological domain" description="Cytoplasmic" evidence="13">
    <location>
        <begin position="348"/>
        <end position="668"/>
    </location>
</feature>
<feature type="region of interest" description="Interaction with KCNE3" evidence="1">
    <location>
        <begin position="237"/>
        <end position="245"/>
    </location>
</feature>
<feature type="region of interest" description="Interaction with CALM" evidence="1">
    <location>
        <begin position="369"/>
        <end position="381"/>
    </location>
</feature>
<feature type="region of interest" description="Interaction with CALM; calcium-dependent" evidence="1">
    <location>
        <begin position="514"/>
        <end position="528"/>
    </location>
</feature>
<feature type="region of interest" description="Interaction with KCNE1 C-terminus" evidence="1">
    <location>
        <begin position="534"/>
        <end position="571"/>
    </location>
</feature>
<feature type="region of interest" description="Interaction with AKAP9" evidence="1">
    <location>
        <begin position="587"/>
        <end position="615"/>
    </location>
</feature>
<feature type="region of interest" description="C-terminal assembly domain (tetramerization)" evidence="1">
    <location>
        <begin position="588"/>
        <end position="619"/>
    </location>
</feature>
<feature type="coiled-coil region" evidence="1">
    <location>
        <begin position="584"/>
        <end position="620"/>
    </location>
</feature>
<feature type="binding site" evidence="1">
    <location>
        <position position="243"/>
    </location>
    <ligand>
        <name>a 1,2-diacyl-sn-glycero-3-phospho-(1D-myo-inositol-4,5-bisphosphate)</name>
        <dbReference type="ChEBI" id="CHEBI:58456"/>
    </ligand>
</feature>
<feature type="modified residue" description="Phosphoserine; by PKA" evidence="1">
    <location>
        <position position="27"/>
    </location>
</feature>
<feature type="modified residue" description="Phosphoserine" evidence="16">
    <location>
        <position position="406"/>
    </location>
</feature>
<feature type="modified residue" description="Phosphoserine" evidence="16">
    <location>
        <position position="408"/>
    </location>
</feature>
<feature type="glycosylation site" description="N-linked (GlcNAc...) asparagine" evidence="3">
    <location>
        <position position="288"/>
    </location>
</feature>
<feature type="splice variant" id="VSP_011748" description="In isoform II." evidence="13">
    <location>
        <begin position="1"/>
        <end position="111"/>
    </location>
</feature>
<feature type="splice variant" id="VSP_000983" description="In isoform II." evidence="13">
    <original>FLERPTGWKCFVYHFTV</original>
    <variation>MHQLPTSILIPKNMPGG</variation>
    <location>
        <begin position="112"/>
        <end position="128"/>
    </location>
</feature>
<feature type="sequence conflict" description="In Ref. 1; AAP93874 and 4; AAB36518." evidence="13" ref="1 4">
    <original>V</original>
    <variation>L</variation>
    <location>
        <position position="473"/>
    </location>
</feature>
<comment type="function">
    <text evidence="1 2 4 5 6 7 8 9 10">Pore-forming subunit of the voltage-gated potassium (Kv) channel involved in the regulation of cardiomyocyte excitability and important in normal development and functions of myocardium, inner ear, stomach and colon (By similarity) (PubMed:11120752, PubMed:15004216, PubMed:16314573). Associates with KCNE beta subunits that modulates current kinetics (By similarity) (PubMed:15004216, PubMed:17597584). Induces a voltage-dependent by rapidly activating and slowly deactivating potassium-selective outward current (By similarity) (PubMed:8900282). Also promotes a delayed voltage activated potassium current showing outward rectification characteristic (By similarity). During beta-adrenergic receptor stimulation participates in cardiac increases the amplitude and slows down the activation kinetics of outward potassium current I(Ks) (By similarity) (PubMed:15004216, PubMed:17597584). Muscarinic agonist oxotremorine-M strongly suppresses KCNQ1/KCNE1 current (By similarity). When associated with KCNE3, forms the potassium channel that is important for cyclic AMP-stimulated intestinal secretion of chloride ions (By similarity). This interaction with KCNE3 is reduced by 17beta-estradiol, resulting in the reduction of currents (By similarity). During conditions of increased substrate load, maintains the driving force for proximal tubular and intestinal sodium ions absorption, gastric acid secretion, and cAMP-induced jejunal chloride ions secretion (PubMed:16314573). Allows the provision of potassium ions to the luminal membrane of the secretory canaliculus in the resting state as well as during stimulated acid secretion (PubMed:19491250). When associated with KCNE2, forms a heterooligomer complex leading to currents with an apparently instantaneous activation, a rapid deactivation process and a linear current-voltage relationship and decreases the amplitude of the outward current (By similarity). When associated with KCNE4, inhibits voltage-gated potassium channel activity (By similarity). When associated with KCNE5, this complex only conducts current upon strong and continued depolarization (By similarity). Also forms a heterotetramer with KCNQ5; has a voltage-gated potassium channel activity (By similarity). Binds with phosphatidylinositol 4,5-bisphosphate (By similarity). KCNQ1-KCNE2 channel associates with Na(+)-coupled myo-inositol symporter in the apical membrane of choroid plexus epithelium and regulates the myo-inositol gradient between blood and cerebrospinal fluid with an impact on neuron excitability (PubMed:24595108).</text>
</comment>
<comment type="catalytic activity">
    <reaction evidence="1">
        <text>K(+)(in) = K(+)(out)</text>
        <dbReference type="Rhea" id="RHEA:29463"/>
        <dbReference type="ChEBI" id="CHEBI:29103"/>
    </reaction>
</comment>
<comment type="activity regulation">
    <text evidence="1">PIP2 molecule is essential to activate KCNQ channels by inducing the coupling of the voltage-sensing domain (VSD) and the pore-forming domain (PD). Upon channel activation, PIP2 disrupts the VSD-calmodulin/CALM interactions, causing the release of CALM from the VSD which triggers the opening of the gate. Calcium potentiates KCNQ1 channel current through calcium-bound CALM. Calcium-bound CALM competes with PIP2 to stabilize the channel open state.</text>
</comment>
<comment type="subunit">
    <text evidence="1 9 10">Tetramer (By similarity). Heterotetramer with KCNE1; form the native cardiac channel I(Ks) which increases the amplitude and slows down the activation kinetics of outward potassium current and targets to the membrane raft (By similarity) (PubMed:8900282). Interacts (via C-terminus) with CALM; forms a heterooctameric structure (with 4:4 KCNQ1:CALM stoichiometry) in a calcium-independent manner. Interacts with AKAP9; targets protein kinase A (PKA) catalytic and regulatory subunits and protein phosphatase 1 (PP1) to the KCNQ1-KCNE1 complex, allowing PKA-mediated phosphorylation and increase of delayed rectifier potassium channel activity. Interacts with KCNE2; form an heterooligomer complex that targets to the membrane raft and leading to currents with an apparently instantaneous activation, a rapid deactivation process and a linear current-voltage relationship and decreases the amplitude of the outward current. Interacts with AP2M1; mediates estrogen-induced internalization via clathrin-coated vesicles. Interacts with NEDD4L; promotes internalization and decreases I(Ks) currents. Interacts with USP2; counteracts the NEDD4L-specific down-regulation of I(Ks) and restore plasma membrane localization. Heterotetramer with KCNQ5; has a voltage-gated potassium channel activity. Interacts with KCNE3; four KCNE3 molecules are bound to one KCNQ1 tetramer (4:4 KCNQ1:KCNE3 stoichiometry); alters membrane raft localization; affects KCNQ1 structure and gating properties. Interacts with KCNE4; impairs KCNQ1 localization in lipid rafts and inhibits voltage-gated potassium channel activity. Interacts with KCNE5; impairs KCNQ1 localization in lipid rafts and only conducts current upon strong and continued depolarization (By similarity). Interacts with SLC5A3; forms coregulatory channel-transporter complexes that modulate Na(+)-coupled myo-inositol influx through the transporter (PubMed:24595108).</text>
</comment>
<comment type="subcellular location">
    <subcellularLocation>
        <location evidence="1">Cell membrane</location>
        <topology evidence="1">Multi-pass membrane protein</topology>
    </subcellularLocation>
    <subcellularLocation>
        <location evidence="1">Cytoplasmic vesicle membrane</location>
    </subcellularLocation>
    <subcellularLocation>
        <location evidence="1">Early endosome</location>
    </subcellularLocation>
    <subcellularLocation>
        <location evidence="1">Membrane raft</location>
    </subcellularLocation>
    <subcellularLocation>
        <location evidence="1">Endoplasmic reticulum</location>
    </subcellularLocation>
    <subcellularLocation>
        <location evidence="1">Basolateral cell membrane</location>
    </subcellularLocation>
    <subcellularLocation>
        <location evidence="9">Apical cell membrane</location>
        <topology evidence="3">Multi-pass membrane protein</topology>
    </subcellularLocation>
    <text evidence="1 9">Colocalized with KCNE3 at the plasma membrane. Upon 17beta-oestradiol treatment, colocalizes with RAB5A at early endosome. Heterotetramer with KCNQ5 is highly retained at the endoplasmic reticulum and is localized outside of lipid raft microdomains. During the early stages of epithelial cell polarization induced by the calcium switch it is removed from the plasma membrane to the endoplasmic reticulum, where it is retained, and redistributed to the basolateral cell surface in a PI3K-dependent manner at a later stage. Colocalizes with SLC5A3 at the apical membrane of choroid plexus epithelium (PubMed:24595108).</text>
</comment>
<comment type="alternative products">
    <event type="alternative splicing"/>
    <isoform>
        <id>P97414-1</id>
        <name>I</name>
        <sequence type="displayed"/>
    </isoform>
    <isoform>
        <id>P97414-2</id>
        <name>II</name>
        <sequence type="described" ref="VSP_011748 VSP_000983"/>
    </isoform>
</comment>
<comment type="tissue specificity">
    <text evidence="9 11">Expressed in heart, kidney and salivary glands. Detected in the cochlea. Almost undetectable in brain, skeletal muscle and liver. Widely expressed in embryonic and neonatal tissues (PubMed:9618174). Expressed in choroid plexus epithelium (at protein level) (PubMed:24595108).</text>
</comment>
<comment type="domain">
    <text evidence="1">Each channel subunit contains six transmembrane segments (S1-S6) with S1-S4 forming one voltage sensing domain (VSD) and S5-S6 contributing to form one quarter of an interlocking pore-forming domain (PD).</text>
</comment>
<comment type="domain">
    <text evidence="1">The segment S6 is involved in the inhibition of voltage-gated potassium channel activity by KCNE4.</text>
</comment>
<comment type="domain">
    <text evidence="1">The CALM binding domains correspond to the first two membrane-proximal helical regions that interact with a single calmodulin/CALM molecule forming a clamp-like structure. Binding of CALM C-terminus to the first helix is calcium-independent and is essential for assembly of the structure. Binding of CALM N-terminus to the second helix is calcium-dependent and regulates electrophysiological activity of the channel.</text>
</comment>
<comment type="domain">
    <text evidence="1">The C-terminal assembly domain carries the major determinants of tetramerization and subunit assembly specificity. Its coiled-coil region is four-stranded.</text>
</comment>
<comment type="PTM">
    <text evidence="1">Phosphorylation at Ser-27 by PKA; increases delayed rectifier potassium channel activity of the KCNQ1-KCNE1 complex through a macromolecular complex that includes PKA, PP1, and the targeting protein AKAP9.</text>
</comment>
<comment type="PTM">
    <text evidence="1">Ubiquitinated by NEDD4L; promotes internalization. The ubiquitinylated form is internalized through a clathrin-mediated endocytosis by interacting with AP2M1 and is recycled back to the cell membrane via RAB4A and RAB11A.</text>
</comment>
<comment type="PTM">
    <text evidence="1">Deubiquitinated by USP2; counteracts the NEDD4L-specific down-regulation of I(Ks) and restores the membrane localization.</text>
</comment>
<comment type="disruption phenotype">
    <text evidence="4 5 6 8">Mice lacking Kcnq1 show an intestinal absorption impairment which is associated with reduced serum vitamin B12 concentrations, mild macrocytic anemia, and fecal loss of sodium and potassium ions (PubMed:16314573). Mice lacking Kcnq1 show microvillar secretory membranes intact, but basal acid secretion is absent and forskolin-stimulated acid output is reduced by approximately 90% in gastric mucosa (PubMed:19491250). Homozygous Kcnq1 mice develop normally and are viable, demonstrate hyperactivity, circling, and nodding behaviors; exhibit no electrocardiographic abnormalities but present a complete deafness, as well as circular movement and repetitive falling; show severe anatomic disruption of the cochlear and vestibular end organs; also display threefold enlargement by weight of the stomach resulting from mucous neck cell hyperplasia (PubMed:11120752). Mice neonates lacking Kcnq1 display significantly prolonged QT intervals during baseline ECG assessments which significantly increased following isoproterenol challenge; furthermore, the slow delayed rectifier potassium current (IKs) is absent (PubMed:15004216).</text>
</comment>
<comment type="similarity">
    <text evidence="13">Belongs to the potassium channel family. KQT (TC 1.A.1.15) subfamily. Kv7.1/KCNQ1 sub-subfamily.</text>
</comment>
<comment type="sequence caution" evidence="13">
    <conflict type="erroneous initiation">
        <sequence resource="EMBL-CDS" id="AAB36518"/>
    </conflict>
    <text>Truncated N-terminus.</text>
</comment>
<sequence length="668" mass="74514">MDTASSPPSAERKRAGWSRLLGARRGSAVVKKCPFSLELAEGGPEGSTVYAPIAPTGAPGLAPPMSTPVSPAPAPADLGPRPRVSLDPRVSIYSARRPLLARTHIQGRVYNFLERPTGWKCFVYHFTVFLIVLVCLIFSVLSTIEQYAALATGTLFWMEIVLVVFFGTEYVVRLWSAGCRSKYVGIWGRLRFARKPISIIDLIVVVASMVVLCVGSKGQVFATSAIRGIRFLQILRMLHVDRQGGTWRLLGSVVFIHRQELITTLYIGFLGLIFSSYFVYLAEKDAVNESGRIEFGSYADALWWGVVTVTTIGYGDKVPQTWVGKTIASCFSVFAISFFALPAGILGSGFALKVQQKQRQKHFNRQIPAAASLIQTAWRCYAAENPDSATWKIYVRKPARSHTLLSPSPKPKKSVMVKKKKFKLDKDNGMSPGEKMFNVPHITYDPPEDRRPDHFSIDGYDSSVRKSPTLLEVSTPHFLRTNSFAEDLDLEGETLLTPITHVSQLRDHHRATIKVIRRMQYFVAKKKFQQARKPYDVRDVIEQYSQGHLNLMVRIKELQRRLDQSIGKPSLFIPISEKSKDRGSNTIGARLNRVEDKVTQLDQRLVIITDMLHQLLSMQQGGPTCNSRSQVVASNEGGSINPELFLPSNSLPTYEQLTVPQTGPDEGS</sequence>
<organism>
    <name type="scientific">Mus musculus</name>
    <name type="common">Mouse</name>
    <dbReference type="NCBI Taxonomy" id="10090"/>
    <lineage>
        <taxon>Eukaryota</taxon>
        <taxon>Metazoa</taxon>
        <taxon>Chordata</taxon>
        <taxon>Craniata</taxon>
        <taxon>Vertebrata</taxon>
        <taxon>Euteleostomi</taxon>
        <taxon>Mammalia</taxon>
        <taxon>Eutheria</taxon>
        <taxon>Euarchontoglires</taxon>
        <taxon>Glires</taxon>
        <taxon>Rodentia</taxon>
        <taxon>Myomorpha</taxon>
        <taxon>Muroidea</taxon>
        <taxon>Muridae</taxon>
        <taxon>Murinae</taxon>
        <taxon>Mus</taxon>
        <taxon>Mus</taxon>
    </lineage>
</organism>
<keyword id="KW-0025">Alternative splicing</keyword>
<keyword id="KW-0112">Calmodulin-binding</keyword>
<keyword id="KW-1003">Cell membrane</keyword>
<keyword id="KW-0175">Coiled coil</keyword>
<keyword id="KW-0968">Cytoplasmic vesicle</keyword>
<keyword id="KW-0256">Endoplasmic reticulum</keyword>
<keyword id="KW-0967">Endosome</keyword>
<keyword id="KW-0325">Glycoprotein</keyword>
<keyword id="KW-0407">Ion channel</keyword>
<keyword id="KW-0406">Ion transport</keyword>
<keyword id="KW-0472">Membrane</keyword>
<keyword id="KW-0597">Phosphoprotein</keyword>
<keyword id="KW-0630">Potassium</keyword>
<keyword id="KW-0631">Potassium channel</keyword>
<keyword id="KW-0633">Potassium transport</keyword>
<keyword id="KW-1185">Reference proteome</keyword>
<keyword id="KW-0812">Transmembrane</keyword>
<keyword id="KW-1133">Transmembrane helix</keyword>
<keyword id="KW-0813">Transport</keyword>
<keyword id="KW-0832">Ubl conjugation</keyword>
<keyword id="KW-0851">Voltage-gated channel</keyword>
<protein>
    <recommendedName>
        <fullName>Potassium voltage-gated channel subfamily KQT member 1</fullName>
    </recommendedName>
    <alternativeName>
        <fullName evidence="14">IKs producing slow voltage-gated potassium channel subunit alpha KvLQT1</fullName>
    </alternativeName>
    <alternativeName>
        <fullName evidence="1">KQT-like 1</fullName>
    </alternativeName>
    <alternativeName>
        <fullName evidence="1">Voltage-gated potassium channel subunit Kv7.1</fullName>
    </alternativeName>
</protein>
<dbReference type="EMBL" id="AY331142">
    <property type="protein sequence ID" value="AAP93874.1"/>
    <property type="molecule type" value="mRNA"/>
</dbReference>
<dbReference type="EMBL" id="AK154244">
    <property type="protein sequence ID" value="BAE32460.1"/>
    <property type="molecule type" value="mRNA"/>
</dbReference>
<dbReference type="EMBL" id="BC045142">
    <property type="protein sequence ID" value="AAH45142.2"/>
    <property type="molecule type" value="mRNA"/>
</dbReference>
<dbReference type="EMBL" id="BC055304">
    <property type="protein sequence ID" value="AAH55304.1"/>
    <property type="molecule type" value="mRNA"/>
</dbReference>
<dbReference type="EMBL" id="U70068">
    <property type="protein sequence ID" value="AAB36518.1"/>
    <property type="status" value="ALT_INIT"/>
    <property type="molecule type" value="mRNA"/>
</dbReference>
<dbReference type="EMBL" id="AJ002201">
    <property type="protein sequence ID" value="CAA05246.1"/>
    <property type="molecule type" value="mRNA"/>
</dbReference>
<dbReference type="CCDS" id="CCDS22039.1">
    <molecule id="P97414-1"/>
</dbReference>
<dbReference type="RefSeq" id="NP_001399540.1">
    <molecule id="P97414-2"/>
    <property type="nucleotide sequence ID" value="NM_001412611.1"/>
</dbReference>
<dbReference type="RefSeq" id="NP_032460.2">
    <molecule id="P97414-1"/>
    <property type="nucleotide sequence ID" value="NM_008434.3"/>
</dbReference>
<dbReference type="BMRB" id="P97414"/>
<dbReference type="SMR" id="P97414"/>
<dbReference type="ComplexPortal" id="CPX-3274">
    <property type="entry name" value="KCNQ1-KCNE1 I(Ks) channel complex"/>
</dbReference>
<dbReference type="ComplexPortal" id="CPX-5826">
    <property type="entry name" value="Kv7.1 channel complex"/>
</dbReference>
<dbReference type="FunCoup" id="P97414">
    <property type="interactions" value="155"/>
</dbReference>
<dbReference type="IntAct" id="P97414">
    <property type="interactions" value="117"/>
</dbReference>
<dbReference type="STRING" id="10090.ENSMUSP00000009689"/>
<dbReference type="DrugCentral" id="P97414"/>
<dbReference type="GuidetoPHARMACOLOGY" id="560"/>
<dbReference type="TCDB" id="1.A.1.15.1">
    <property type="family name" value="the voltage-gated ion channel (vic) superfamily"/>
</dbReference>
<dbReference type="GlyCosmos" id="P97414">
    <property type="glycosylation" value="1 site, No reported glycans"/>
</dbReference>
<dbReference type="GlyGen" id="P97414">
    <property type="glycosylation" value="2 sites"/>
</dbReference>
<dbReference type="iPTMnet" id="P97414"/>
<dbReference type="PhosphoSitePlus" id="P97414"/>
<dbReference type="PaxDb" id="10090-ENSMUSP00000009689"/>
<dbReference type="PeptideAtlas" id="P97414"/>
<dbReference type="ProteomicsDB" id="268965">
    <molecule id="P97414-1"/>
</dbReference>
<dbReference type="ProteomicsDB" id="268966">
    <molecule id="P97414-2"/>
</dbReference>
<dbReference type="Antibodypedia" id="4357">
    <property type="antibodies" value="488 antibodies from 39 providers"/>
</dbReference>
<dbReference type="DNASU" id="16535"/>
<dbReference type="Ensembl" id="ENSMUST00000009689.11">
    <molecule id="P97414-1"/>
    <property type="protein sequence ID" value="ENSMUSP00000009689.5"/>
    <property type="gene ID" value="ENSMUSG00000009545.15"/>
</dbReference>
<dbReference type="GeneID" id="16535"/>
<dbReference type="KEGG" id="mmu:16535"/>
<dbReference type="UCSC" id="uc009kpb.1">
    <molecule id="P97414-1"/>
    <property type="organism name" value="mouse"/>
</dbReference>
<dbReference type="AGR" id="MGI:108083"/>
<dbReference type="CTD" id="3784"/>
<dbReference type="MGI" id="MGI:108083">
    <property type="gene designation" value="Kcnq1"/>
</dbReference>
<dbReference type="VEuPathDB" id="HostDB:ENSMUSG00000009545"/>
<dbReference type="eggNOG" id="KOG1419">
    <property type="taxonomic scope" value="Eukaryota"/>
</dbReference>
<dbReference type="GeneTree" id="ENSGT00940000161001"/>
<dbReference type="InParanoid" id="P97414"/>
<dbReference type="OMA" id="APLEMNE"/>
<dbReference type="OrthoDB" id="8879391at2759"/>
<dbReference type="PhylomeDB" id="P97414"/>
<dbReference type="TreeFam" id="TF315186"/>
<dbReference type="Reactome" id="R-MMU-1296072">
    <property type="pathway name" value="Voltage gated Potassium channels"/>
</dbReference>
<dbReference type="Reactome" id="R-MMU-5576890">
    <property type="pathway name" value="Phase 3 - rapid repolarisation"/>
</dbReference>
<dbReference type="Reactome" id="R-MMU-5576893">
    <property type="pathway name" value="Phase 2 - plateau phase"/>
</dbReference>
<dbReference type="BioGRID-ORCS" id="16535">
    <property type="hits" value="2 hits in 77 CRISPR screens"/>
</dbReference>
<dbReference type="ChiTaRS" id="Kcnq1">
    <property type="organism name" value="mouse"/>
</dbReference>
<dbReference type="PRO" id="PR:P97414"/>
<dbReference type="Proteomes" id="UP000000589">
    <property type="component" value="Chromosome 7"/>
</dbReference>
<dbReference type="RNAct" id="P97414">
    <property type="molecule type" value="protein"/>
</dbReference>
<dbReference type="Bgee" id="ENSMUSG00000009545">
    <property type="expression patterns" value="Expressed in epithelium of stomach and 119 other cell types or tissues"/>
</dbReference>
<dbReference type="ExpressionAtlas" id="P97414">
    <property type="expression patterns" value="baseline and differential"/>
</dbReference>
<dbReference type="GO" id="GO:0045177">
    <property type="term" value="C:apical part of cell"/>
    <property type="evidence" value="ECO:0000314"/>
    <property type="project" value="MGI"/>
</dbReference>
<dbReference type="GO" id="GO:0016324">
    <property type="term" value="C:apical plasma membrane"/>
    <property type="evidence" value="ECO:0000314"/>
    <property type="project" value="UniProtKB"/>
</dbReference>
<dbReference type="GO" id="GO:1990794">
    <property type="term" value="C:basolateral part of cell"/>
    <property type="evidence" value="ECO:0000314"/>
    <property type="project" value="MGI"/>
</dbReference>
<dbReference type="GO" id="GO:0016323">
    <property type="term" value="C:basolateral plasma membrane"/>
    <property type="evidence" value="ECO:0000250"/>
    <property type="project" value="UniProtKB"/>
</dbReference>
<dbReference type="GO" id="GO:0097546">
    <property type="term" value="C:ciliary base"/>
    <property type="evidence" value="ECO:0000314"/>
    <property type="project" value="MGI"/>
</dbReference>
<dbReference type="GO" id="GO:0005737">
    <property type="term" value="C:cytoplasm"/>
    <property type="evidence" value="ECO:0000314"/>
    <property type="project" value="MGI"/>
</dbReference>
<dbReference type="GO" id="GO:0030659">
    <property type="term" value="C:cytoplasmic vesicle membrane"/>
    <property type="evidence" value="ECO:0007669"/>
    <property type="project" value="UniProtKB-SubCell"/>
</dbReference>
<dbReference type="GO" id="GO:0005829">
    <property type="term" value="C:cytosol"/>
    <property type="evidence" value="ECO:0007669"/>
    <property type="project" value="Ensembl"/>
</dbReference>
<dbReference type="GO" id="GO:0005769">
    <property type="term" value="C:early endosome"/>
    <property type="evidence" value="ECO:0007669"/>
    <property type="project" value="UniProtKB-SubCell"/>
</dbReference>
<dbReference type="GO" id="GO:0005783">
    <property type="term" value="C:endoplasmic reticulum"/>
    <property type="evidence" value="ECO:0007669"/>
    <property type="project" value="UniProtKB-SubCell"/>
</dbReference>
<dbReference type="GO" id="GO:0005770">
    <property type="term" value="C:late endosome"/>
    <property type="evidence" value="ECO:0007669"/>
    <property type="project" value="Ensembl"/>
</dbReference>
<dbReference type="GO" id="GO:0098576">
    <property type="term" value="C:lumenal side of membrane"/>
    <property type="evidence" value="ECO:0000314"/>
    <property type="project" value="MGI"/>
</dbReference>
<dbReference type="GO" id="GO:0005764">
    <property type="term" value="C:lysosome"/>
    <property type="evidence" value="ECO:0007669"/>
    <property type="project" value="Ensembl"/>
</dbReference>
<dbReference type="GO" id="GO:0016020">
    <property type="term" value="C:membrane"/>
    <property type="evidence" value="ECO:0000303"/>
    <property type="project" value="ComplexPortal"/>
</dbReference>
<dbReference type="GO" id="GO:0045121">
    <property type="term" value="C:membrane raft"/>
    <property type="evidence" value="ECO:0000250"/>
    <property type="project" value="UniProtKB"/>
</dbReference>
<dbReference type="GO" id="GO:0034702">
    <property type="term" value="C:monoatomic ion channel complex"/>
    <property type="evidence" value="ECO:0000250"/>
    <property type="project" value="UniProtKB"/>
</dbReference>
<dbReference type="GO" id="GO:0043005">
    <property type="term" value="C:neuron projection"/>
    <property type="evidence" value="ECO:0000315"/>
    <property type="project" value="MGI"/>
</dbReference>
<dbReference type="GO" id="GO:0043025">
    <property type="term" value="C:neuronal cell body"/>
    <property type="evidence" value="ECO:0000315"/>
    <property type="project" value="MGI"/>
</dbReference>
<dbReference type="GO" id="GO:0005886">
    <property type="term" value="C:plasma membrane"/>
    <property type="evidence" value="ECO:0000314"/>
    <property type="project" value="MGI"/>
</dbReference>
<dbReference type="GO" id="GO:0034705">
    <property type="term" value="C:potassium channel complex"/>
    <property type="evidence" value="ECO:0000314"/>
    <property type="project" value="MGI"/>
</dbReference>
<dbReference type="GO" id="GO:0030133">
    <property type="term" value="C:transport vesicle"/>
    <property type="evidence" value="ECO:0000314"/>
    <property type="project" value="MGI"/>
</dbReference>
<dbReference type="GO" id="GO:0008076">
    <property type="term" value="C:voltage-gated potassium channel complex"/>
    <property type="evidence" value="ECO:0000314"/>
    <property type="project" value="MGI"/>
</dbReference>
<dbReference type="GO" id="GO:0005516">
    <property type="term" value="F:calmodulin binding"/>
    <property type="evidence" value="ECO:0007669"/>
    <property type="project" value="UniProtKB-KW"/>
</dbReference>
<dbReference type="GO" id="GO:0005251">
    <property type="term" value="F:delayed rectifier potassium channel activity"/>
    <property type="evidence" value="ECO:0000250"/>
    <property type="project" value="UniProtKB"/>
</dbReference>
<dbReference type="GO" id="GO:0015271">
    <property type="term" value="F:outward rectifier potassium channel activity"/>
    <property type="evidence" value="ECO:0000250"/>
    <property type="project" value="UniProtKB"/>
</dbReference>
<dbReference type="GO" id="GO:0005546">
    <property type="term" value="F:phosphatidylinositol-4,5-bisphosphate binding"/>
    <property type="evidence" value="ECO:0000250"/>
    <property type="project" value="UniProtKB"/>
</dbReference>
<dbReference type="GO" id="GO:0034236">
    <property type="term" value="F:protein kinase A catalytic subunit binding"/>
    <property type="evidence" value="ECO:0007669"/>
    <property type="project" value="Ensembl"/>
</dbReference>
<dbReference type="GO" id="GO:0034237">
    <property type="term" value="F:protein kinase A regulatory subunit binding"/>
    <property type="evidence" value="ECO:0007669"/>
    <property type="project" value="Ensembl"/>
</dbReference>
<dbReference type="GO" id="GO:0008157">
    <property type="term" value="F:protein phosphatase 1 binding"/>
    <property type="evidence" value="ECO:0007669"/>
    <property type="project" value="Ensembl"/>
</dbReference>
<dbReference type="GO" id="GO:0097110">
    <property type="term" value="F:scaffold protein binding"/>
    <property type="evidence" value="ECO:0007669"/>
    <property type="project" value="Ensembl"/>
</dbReference>
<dbReference type="GO" id="GO:0044325">
    <property type="term" value="F:transmembrane transporter binding"/>
    <property type="evidence" value="ECO:0007669"/>
    <property type="project" value="Ensembl"/>
</dbReference>
<dbReference type="GO" id="GO:0031625">
    <property type="term" value="F:ubiquitin protein ligase binding"/>
    <property type="evidence" value="ECO:0007669"/>
    <property type="project" value="Ensembl"/>
</dbReference>
<dbReference type="GO" id="GO:0005249">
    <property type="term" value="F:voltage-gated potassium channel activity"/>
    <property type="evidence" value="ECO:0000314"/>
    <property type="project" value="UniProtKB"/>
</dbReference>
<dbReference type="GO" id="GO:0086089">
    <property type="term" value="F:voltage-gated potassium channel activity involved in atrial cardiac muscle cell action potential repolarization"/>
    <property type="evidence" value="ECO:0007669"/>
    <property type="project" value="Ensembl"/>
</dbReference>
<dbReference type="GO" id="GO:1902282">
    <property type="term" value="F:voltage-gated potassium channel activity involved in ventricular cardiac muscle cell action potential repolarization"/>
    <property type="evidence" value="ECO:0007669"/>
    <property type="project" value="Ensembl"/>
</dbReference>
<dbReference type="GO" id="GO:0071875">
    <property type="term" value="P:adrenergic receptor signaling pathway"/>
    <property type="evidence" value="ECO:0000315"/>
    <property type="project" value="MGI"/>
</dbReference>
<dbReference type="GO" id="GO:0060117">
    <property type="term" value="P:auditory receptor cell development"/>
    <property type="evidence" value="ECO:0000315"/>
    <property type="project" value="MGI"/>
</dbReference>
<dbReference type="GO" id="GO:0061337">
    <property type="term" value="P:cardiac conduction"/>
    <property type="evidence" value="ECO:0000315"/>
    <property type="project" value="MGI"/>
</dbReference>
<dbReference type="GO" id="GO:0086003">
    <property type="term" value="P:cardiac muscle cell contraction"/>
    <property type="evidence" value="ECO:0000303"/>
    <property type="project" value="ComplexPortal"/>
</dbReference>
<dbReference type="GO" id="GO:0060048">
    <property type="term" value="P:cardiac muscle contraction"/>
    <property type="evidence" value="ECO:0000315"/>
    <property type="project" value="MGI"/>
</dbReference>
<dbReference type="GO" id="GO:0071320">
    <property type="term" value="P:cellular response to cAMP"/>
    <property type="evidence" value="ECO:0007669"/>
    <property type="project" value="Ensembl"/>
</dbReference>
<dbReference type="GO" id="GO:0071872">
    <property type="term" value="P:cellular response to epinephrine stimulus"/>
    <property type="evidence" value="ECO:0000315"/>
    <property type="project" value="MGI"/>
</dbReference>
<dbReference type="GO" id="GO:0071466">
    <property type="term" value="P:cellular response to xenobiotic stimulus"/>
    <property type="evidence" value="ECO:0007669"/>
    <property type="project" value="Ensembl"/>
</dbReference>
<dbReference type="GO" id="GO:0055064">
    <property type="term" value="P:chloride ion homeostasis"/>
    <property type="evidence" value="ECO:0000315"/>
    <property type="project" value="MGI"/>
</dbReference>
<dbReference type="GO" id="GO:0090102">
    <property type="term" value="P:cochlea development"/>
    <property type="evidence" value="ECO:0000315"/>
    <property type="project" value="MGI"/>
</dbReference>
<dbReference type="GO" id="GO:0035934">
    <property type="term" value="P:corticosterone secretion"/>
    <property type="evidence" value="ECO:0000315"/>
    <property type="project" value="MGI"/>
</dbReference>
<dbReference type="GO" id="GO:0050910">
    <property type="term" value="P:detection of mechanical stimulus involved in sensory perception of sound"/>
    <property type="evidence" value="ECO:0000315"/>
    <property type="project" value="MGI"/>
</dbReference>
<dbReference type="GO" id="GO:0022600">
    <property type="term" value="P:digestive system process"/>
    <property type="evidence" value="ECO:0000315"/>
    <property type="project" value="MGI"/>
</dbReference>
<dbReference type="GO" id="GO:0030218">
    <property type="term" value="P:erythrocyte differentiation"/>
    <property type="evidence" value="ECO:0000315"/>
    <property type="project" value="MGI"/>
</dbReference>
<dbReference type="GO" id="GO:0001696">
    <property type="term" value="P:gastric acid secretion"/>
    <property type="evidence" value="ECO:0000315"/>
    <property type="project" value="MGI"/>
</dbReference>
<dbReference type="GO" id="GO:0001698">
    <property type="term" value="P:gastrin-induced gastric acid secretion"/>
    <property type="evidence" value="ECO:0000315"/>
    <property type="project" value="MGI"/>
</dbReference>
<dbReference type="GO" id="GO:0006006">
    <property type="term" value="P:glucose metabolic process"/>
    <property type="evidence" value="ECO:0000315"/>
    <property type="project" value="MGI"/>
</dbReference>
<dbReference type="GO" id="GO:0007507">
    <property type="term" value="P:heart development"/>
    <property type="evidence" value="ECO:0000315"/>
    <property type="project" value="MGI"/>
</dbReference>
<dbReference type="GO" id="GO:0048839">
    <property type="term" value="P:inner ear development"/>
    <property type="evidence" value="ECO:0000315"/>
    <property type="project" value="UniProtKB"/>
</dbReference>
<dbReference type="GO" id="GO:0042472">
    <property type="term" value="P:inner ear morphogenesis"/>
    <property type="evidence" value="ECO:0000315"/>
    <property type="project" value="MGI"/>
</dbReference>
<dbReference type="GO" id="GO:0050892">
    <property type="term" value="P:intestinal absorption"/>
    <property type="evidence" value="ECO:0000250"/>
    <property type="project" value="UniProtKB"/>
</dbReference>
<dbReference type="GO" id="GO:0030644">
    <property type="term" value="P:intracellular chloride ion homeostasis"/>
    <property type="evidence" value="ECO:0000314"/>
    <property type="project" value="MGI"/>
</dbReference>
<dbReference type="GO" id="GO:0015705">
    <property type="term" value="P:iodide transport"/>
    <property type="evidence" value="ECO:0000315"/>
    <property type="project" value="MGI"/>
</dbReference>
<dbReference type="GO" id="GO:0086009">
    <property type="term" value="P:membrane repolarization"/>
    <property type="evidence" value="ECO:0000315"/>
    <property type="project" value="UniProtKB"/>
</dbReference>
<dbReference type="GO" id="GO:0086011">
    <property type="term" value="P:membrane repolarization during action potential"/>
    <property type="evidence" value="ECO:0000315"/>
    <property type="project" value="MGI"/>
</dbReference>
<dbReference type="GO" id="GO:0098914">
    <property type="term" value="P:membrane repolarization during atrial cardiac muscle cell action potential"/>
    <property type="evidence" value="ECO:0007669"/>
    <property type="project" value="Ensembl"/>
</dbReference>
<dbReference type="GO" id="GO:0086013">
    <property type="term" value="P:membrane repolarization during cardiac muscle cell action potential"/>
    <property type="evidence" value="ECO:0000303"/>
    <property type="project" value="ComplexPortal"/>
</dbReference>
<dbReference type="GO" id="GO:0098915">
    <property type="term" value="P:membrane repolarization during ventricular cardiac muscle cell action potential"/>
    <property type="evidence" value="ECO:0000315"/>
    <property type="project" value="MGI"/>
</dbReference>
<dbReference type="GO" id="GO:1905515">
    <property type="term" value="P:non-motile cilium assembly"/>
    <property type="evidence" value="ECO:0000314"/>
    <property type="project" value="MGI"/>
</dbReference>
<dbReference type="GO" id="GO:0060452">
    <property type="term" value="P:positive regulation of cardiac muscle contraction"/>
    <property type="evidence" value="ECO:0007669"/>
    <property type="project" value="Ensembl"/>
</dbReference>
<dbReference type="GO" id="GO:0010460">
    <property type="term" value="P:positive regulation of heart rate"/>
    <property type="evidence" value="ECO:0007669"/>
    <property type="project" value="Ensembl"/>
</dbReference>
<dbReference type="GO" id="GO:1901381">
    <property type="term" value="P:positive regulation of potassium ion transmembrane transport"/>
    <property type="evidence" value="ECO:0007669"/>
    <property type="project" value="Ensembl"/>
</dbReference>
<dbReference type="GO" id="GO:0097623">
    <property type="term" value="P:potassium ion export across plasma membrane"/>
    <property type="evidence" value="ECO:0000303"/>
    <property type="project" value="ComplexPortal"/>
</dbReference>
<dbReference type="GO" id="GO:0055075">
    <property type="term" value="P:potassium ion homeostasis"/>
    <property type="evidence" value="ECO:0000315"/>
    <property type="project" value="MGI"/>
</dbReference>
<dbReference type="GO" id="GO:1990573">
    <property type="term" value="P:potassium ion import across plasma membrane"/>
    <property type="evidence" value="ECO:0000315"/>
    <property type="project" value="MGI"/>
</dbReference>
<dbReference type="GO" id="GO:0071805">
    <property type="term" value="P:potassium ion transmembrane transport"/>
    <property type="evidence" value="ECO:0000314"/>
    <property type="project" value="MGI"/>
</dbReference>
<dbReference type="GO" id="GO:0060372">
    <property type="term" value="P:regulation of atrial cardiac muscle cell membrane repolarization"/>
    <property type="evidence" value="ECO:0007669"/>
    <property type="project" value="Ensembl"/>
</dbReference>
<dbReference type="GO" id="GO:0008217">
    <property type="term" value="P:regulation of blood pressure"/>
    <property type="evidence" value="ECO:0000315"/>
    <property type="project" value="MGI"/>
</dbReference>
<dbReference type="GO" id="GO:0060453">
    <property type="term" value="P:regulation of gastric acid secretion"/>
    <property type="evidence" value="ECO:0000315"/>
    <property type="project" value="UniProtKB"/>
</dbReference>
<dbReference type="GO" id="GO:0002027">
    <property type="term" value="P:regulation of heart rate"/>
    <property type="evidence" value="ECO:0000315"/>
    <property type="project" value="MGI"/>
</dbReference>
<dbReference type="GO" id="GO:0086091">
    <property type="term" value="P:regulation of heart rate by cardiac conduction"/>
    <property type="evidence" value="ECO:0007669"/>
    <property type="project" value="Ensembl"/>
</dbReference>
<dbReference type="GO" id="GO:0060307">
    <property type="term" value="P:regulation of ventricular cardiac muscle cell membrane repolarization"/>
    <property type="evidence" value="ECO:0000315"/>
    <property type="project" value="MGI"/>
</dbReference>
<dbReference type="GO" id="GO:0070293">
    <property type="term" value="P:renal absorption"/>
    <property type="evidence" value="ECO:0000315"/>
    <property type="project" value="UniProtKB"/>
</dbReference>
<dbReference type="GO" id="GO:0070294">
    <property type="term" value="P:renal sodium ion absorption"/>
    <property type="evidence" value="ECO:0000315"/>
    <property type="project" value="MGI"/>
</dbReference>
<dbReference type="GO" id="GO:0032868">
    <property type="term" value="P:response to insulin"/>
    <property type="evidence" value="ECO:0000315"/>
    <property type="project" value="MGI"/>
</dbReference>
<dbReference type="GO" id="GO:0007622">
    <property type="term" value="P:rhythmic behavior"/>
    <property type="evidence" value="ECO:0000315"/>
    <property type="project" value="MGI"/>
</dbReference>
<dbReference type="GO" id="GO:0007605">
    <property type="term" value="P:sensory perception of sound"/>
    <property type="evidence" value="ECO:0000315"/>
    <property type="project" value="MGI"/>
</dbReference>
<dbReference type="GO" id="GO:0035176">
    <property type="term" value="P:social behavior"/>
    <property type="evidence" value="ECO:0000315"/>
    <property type="project" value="MGI"/>
</dbReference>
<dbReference type="GO" id="GO:0006814">
    <property type="term" value="P:sodium ion transport"/>
    <property type="evidence" value="ECO:0000314"/>
    <property type="project" value="MGI"/>
</dbReference>
<dbReference type="GO" id="GO:0062094">
    <property type="term" value="P:stomach development"/>
    <property type="evidence" value="ECO:0000315"/>
    <property type="project" value="MGI"/>
</dbReference>
<dbReference type="FunFam" id="1.10.287.70:FF:000113">
    <property type="entry name" value="Potassium voltage-gated channel subfamily KQT member 1"/>
    <property type="match status" value="1"/>
</dbReference>
<dbReference type="FunFam" id="1.20.120.350:FF:000017">
    <property type="entry name" value="potassium voltage-gated channel subfamily KQT member 1"/>
    <property type="match status" value="1"/>
</dbReference>
<dbReference type="Gene3D" id="1.10.287.70">
    <property type="match status" value="1"/>
</dbReference>
<dbReference type="Gene3D" id="6.10.140.1910">
    <property type="match status" value="2"/>
</dbReference>
<dbReference type="Gene3D" id="1.20.120.350">
    <property type="entry name" value="Voltage-gated potassium channels. Chain C"/>
    <property type="match status" value="1"/>
</dbReference>
<dbReference type="InterPro" id="IPR005821">
    <property type="entry name" value="Ion_trans_dom"/>
</dbReference>
<dbReference type="InterPro" id="IPR003937">
    <property type="entry name" value="K_chnl_volt-dep_KCNQ"/>
</dbReference>
<dbReference type="InterPro" id="IPR013821">
    <property type="entry name" value="K_chnl_volt-dep_KCNQ_C"/>
</dbReference>
<dbReference type="InterPro" id="IPR005827">
    <property type="entry name" value="K_chnl_volt-dep_KCQN1"/>
</dbReference>
<dbReference type="InterPro" id="IPR027359">
    <property type="entry name" value="Volt_channel_dom_sf"/>
</dbReference>
<dbReference type="PANTHER" id="PTHR47735:SF14">
    <property type="entry name" value="POTASSIUM VOLTAGE-GATED CHANNEL SUBFAMILY KQT MEMBER 1"/>
    <property type="match status" value="1"/>
</dbReference>
<dbReference type="PANTHER" id="PTHR47735">
    <property type="entry name" value="POTASSIUM VOLTAGE-GATED CHANNEL SUBFAMILY KQT MEMBER 4"/>
    <property type="match status" value="1"/>
</dbReference>
<dbReference type="Pfam" id="PF00520">
    <property type="entry name" value="Ion_trans"/>
    <property type="match status" value="1"/>
</dbReference>
<dbReference type="Pfam" id="PF03520">
    <property type="entry name" value="KCNQ_channel"/>
    <property type="match status" value="1"/>
</dbReference>
<dbReference type="PRINTS" id="PR00169">
    <property type="entry name" value="KCHANNEL"/>
</dbReference>
<dbReference type="PRINTS" id="PR01460">
    <property type="entry name" value="KCNQ1CHANNEL"/>
</dbReference>
<dbReference type="PRINTS" id="PR01459">
    <property type="entry name" value="KCNQCHANNEL"/>
</dbReference>
<dbReference type="SUPFAM" id="SSF81324">
    <property type="entry name" value="Voltage-gated potassium channels"/>
    <property type="match status" value="1"/>
</dbReference>
<gene>
    <name evidence="15" type="primary">Kcnq1</name>
    <name evidence="15" type="synonym">Kcna9</name>
    <name evidence="12" type="synonym">Kvlqt1</name>
</gene>
<name>KCNQ1_MOUSE</name>
<proteinExistence type="evidence at protein level"/>
<reference key="1">
    <citation type="journal article" date="2004" name="J. Pharmacol. Exp. Ther.">
        <title>Isoproterenol exacerbates a long QT phenotype in Kcnq1-deficient neonatal mice: possible roles for human-like Kcnq1 isoform 1 and slow delayed rectifier K+ current.</title>
        <authorList>
            <person name="Knollmann B.C."/>
            <person name="Casimiro M.C."/>
            <person name="Katchman A.N."/>
            <person name="Sirenko S.G."/>
            <person name="Schober T."/>
            <person name="Rong Q."/>
            <person name="Pfeifer K."/>
            <person name="Ebert S.N."/>
        </authorList>
    </citation>
    <scope>NUCLEOTIDE SEQUENCE [MRNA] (ISOFORM I)</scope>
    <scope>FUNCTION</scope>
    <scope>DISRUPTION PHENOTYPE</scope>
    <source>
        <strain>129/SvJ</strain>
        <tissue>Heart</tissue>
    </source>
</reference>
<reference key="2">
    <citation type="journal article" date="2005" name="Science">
        <title>The transcriptional landscape of the mammalian genome.</title>
        <authorList>
            <person name="Carninci P."/>
            <person name="Kasukawa T."/>
            <person name="Katayama S."/>
            <person name="Gough J."/>
            <person name="Frith M.C."/>
            <person name="Maeda N."/>
            <person name="Oyama R."/>
            <person name="Ravasi T."/>
            <person name="Lenhard B."/>
            <person name="Wells C."/>
            <person name="Kodzius R."/>
            <person name="Shimokawa K."/>
            <person name="Bajic V.B."/>
            <person name="Brenner S.E."/>
            <person name="Batalov S."/>
            <person name="Forrest A.R."/>
            <person name="Zavolan M."/>
            <person name="Davis M.J."/>
            <person name="Wilming L.G."/>
            <person name="Aidinis V."/>
            <person name="Allen J.E."/>
            <person name="Ambesi-Impiombato A."/>
            <person name="Apweiler R."/>
            <person name="Aturaliya R.N."/>
            <person name="Bailey T.L."/>
            <person name="Bansal M."/>
            <person name="Baxter L."/>
            <person name="Beisel K.W."/>
            <person name="Bersano T."/>
            <person name="Bono H."/>
            <person name="Chalk A.M."/>
            <person name="Chiu K.P."/>
            <person name="Choudhary V."/>
            <person name="Christoffels A."/>
            <person name="Clutterbuck D.R."/>
            <person name="Crowe M.L."/>
            <person name="Dalla E."/>
            <person name="Dalrymple B.P."/>
            <person name="de Bono B."/>
            <person name="Della Gatta G."/>
            <person name="di Bernardo D."/>
            <person name="Down T."/>
            <person name="Engstrom P."/>
            <person name="Fagiolini M."/>
            <person name="Faulkner G."/>
            <person name="Fletcher C.F."/>
            <person name="Fukushima T."/>
            <person name="Furuno M."/>
            <person name="Futaki S."/>
            <person name="Gariboldi M."/>
            <person name="Georgii-Hemming P."/>
            <person name="Gingeras T.R."/>
            <person name="Gojobori T."/>
            <person name="Green R.E."/>
            <person name="Gustincich S."/>
            <person name="Harbers M."/>
            <person name="Hayashi Y."/>
            <person name="Hensch T.K."/>
            <person name="Hirokawa N."/>
            <person name="Hill D."/>
            <person name="Huminiecki L."/>
            <person name="Iacono M."/>
            <person name="Ikeo K."/>
            <person name="Iwama A."/>
            <person name="Ishikawa T."/>
            <person name="Jakt M."/>
            <person name="Kanapin A."/>
            <person name="Katoh M."/>
            <person name="Kawasawa Y."/>
            <person name="Kelso J."/>
            <person name="Kitamura H."/>
            <person name="Kitano H."/>
            <person name="Kollias G."/>
            <person name="Krishnan S.P."/>
            <person name="Kruger A."/>
            <person name="Kummerfeld S.K."/>
            <person name="Kurochkin I.V."/>
            <person name="Lareau L.F."/>
            <person name="Lazarevic D."/>
            <person name="Lipovich L."/>
            <person name="Liu J."/>
            <person name="Liuni S."/>
            <person name="McWilliam S."/>
            <person name="Madan Babu M."/>
            <person name="Madera M."/>
            <person name="Marchionni L."/>
            <person name="Matsuda H."/>
            <person name="Matsuzawa S."/>
            <person name="Miki H."/>
            <person name="Mignone F."/>
            <person name="Miyake S."/>
            <person name="Morris K."/>
            <person name="Mottagui-Tabar S."/>
            <person name="Mulder N."/>
            <person name="Nakano N."/>
            <person name="Nakauchi H."/>
            <person name="Ng P."/>
            <person name="Nilsson R."/>
            <person name="Nishiguchi S."/>
            <person name="Nishikawa S."/>
            <person name="Nori F."/>
            <person name="Ohara O."/>
            <person name="Okazaki Y."/>
            <person name="Orlando V."/>
            <person name="Pang K.C."/>
            <person name="Pavan W.J."/>
            <person name="Pavesi G."/>
            <person name="Pesole G."/>
            <person name="Petrovsky N."/>
            <person name="Piazza S."/>
            <person name="Reed J."/>
            <person name="Reid J.F."/>
            <person name="Ring B.Z."/>
            <person name="Ringwald M."/>
            <person name="Rost B."/>
            <person name="Ruan Y."/>
            <person name="Salzberg S.L."/>
            <person name="Sandelin A."/>
            <person name="Schneider C."/>
            <person name="Schoenbach C."/>
            <person name="Sekiguchi K."/>
            <person name="Semple C.A."/>
            <person name="Seno S."/>
            <person name="Sessa L."/>
            <person name="Sheng Y."/>
            <person name="Shibata Y."/>
            <person name="Shimada H."/>
            <person name="Shimada K."/>
            <person name="Silva D."/>
            <person name="Sinclair B."/>
            <person name="Sperling S."/>
            <person name="Stupka E."/>
            <person name="Sugiura K."/>
            <person name="Sultana R."/>
            <person name="Takenaka Y."/>
            <person name="Taki K."/>
            <person name="Tammoja K."/>
            <person name="Tan S.L."/>
            <person name="Tang S."/>
            <person name="Taylor M.S."/>
            <person name="Tegner J."/>
            <person name="Teichmann S.A."/>
            <person name="Ueda H.R."/>
            <person name="van Nimwegen E."/>
            <person name="Verardo R."/>
            <person name="Wei C.L."/>
            <person name="Yagi K."/>
            <person name="Yamanishi H."/>
            <person name="Zabarovsky E."/>
            <person name="Zhu S."/>
            <person name="Zimmer A."/>
            <person name="Hide W."/>
            <person name="Bult C."/>
            <person name="Grimmond S.M."/>
            <person name="Teasdale R.D."/>
            <person name="Liu E.T."/>
            <person name="Brusic V."/>
            <person name="Quackenbush J."/>
            <person name="Wahlestedt C."/>
            <person name="Mattick J.S."/>
            <person name="Hume D.A."/>
            <person name="Kai C."/>
            <person name="Sasaki D."/>
            <person name="Tomaru Y."/>
            <person name="Fukuda S."/>
            <person name="Kanamori-Katayama M."/>
            <person name="Suzuki M."/>
            <person name="Aoki J."/>
            <person name="Arakawa T."/>
            <person name="Iida J."/>
            <person name="Imamura K."/>
            <person name="Itoh M."/>
            <person name="Kato T."/>
            <person name="Kawaji H."/>
            <person name="Kawagashira N."/>
            <person name="Kawashima T."/>
            <person name="Kojima M."/>
            <person name="Kondo S."/>
            <person name="Konno H."/>
            <person name="Nakano K."/>
            <person name="Ninomiya N."/>
            <person name="Nishio T."/>
            <person name="Okada M."/>
            <person name="Plessy C."/>
            <person name="Shibata K."/>
            <person name="Shiraki T."/>
            <person name="Suzuki S."/>
            <person name="Tagami M."/>
            <person name="Waki K."/>
            <person name="Watahiki A."/>
            <person name="Okamura-Oho Y."/>
            <person name="Suzuki H."/>
            <person name="Kawai J."/>
            <person name="Hayashizaki Y."/>
        </authorList>
    </citation>
    <scope>NUCLEOTIDE SEQUENCE [LARGE SCALE MRNA] (ISOFORM I)</scope>
    <source>
        <strain>NOD</strain>
    </source>
</reference>
<reference key="3">
    <citation type="journal article" date="2004" name="Genome Res.">
        <title>The status, quality, and expansion of the NIH full-length cDNA project: the Mammalian Gene Collection (MGC).</title>
        <authorList>
            <consortium name="The MGC Project Team"/>
        </authorList>
    </citation>
    <scope>NUCLEOTIDE SEQUENCE [LARGE SCALE MRNA] (ISOFORM I)</scope>
    <source>
        <strain>FVB/N</strain>
        <tissue>Colon</tissue>
        <tissue>Olfactory epithelium</tissue>
    </source>
</reference>
<reference key="4">
    <citation type="journal article" date="1996" name="Nature">
        <title>K(V)LQT1 and IsK (minK) proteins associate to form the I(Ks) cardiac potassium current.</title>
        <authorList>
            <person name="Barhanin J."/>
            <person name="Lesage F."/>
            <person name="Guillemare E."/>
            <person name="Fink M."/>
            <person name="Lazdunski M."/>
            <person name="Romey G."/>
        </authorList>
    </citation>
    <scope>NUCLEOTIDE SEQUENCE [MRNA] OF 31-668 (ISOFORM I)</scope>
    <scope>FUNCTION</scope>
    <scope>INTERACTION WITH KCNE1</scope>
    <source>
        <tissue>Heart</tissue>
    </source>
</reference>
<reference key="5">
    <citation type="journal article" date="1998" name="Hum. Mol. Genet.">
        <title>Syntenic organization of the mouse distal chromosome 7 imprinting cluster and the Beckwith-Wiedemann syndrome region in chromosome 11p15.5.</title>
        <authorList>
            <person name="Paulsen M."/>
            <person name="Davies K.R."/>
            <person name="Bowden L.M."/>
            <person name="Villar A.J."/>
            <person name="Franck O."/>
            <person name="Fuermann M."/>
            <person name="Dean W.L."/>
            <person name="Moore T.F."/>
            <person name="Rodrigues N."/>
            <person name="Davies K.E."/>
            <person name="Hu R.-J."/>
            <person name="Feinberg A.P."/>
            <person name="Maher E.R."/>
            <person name="Reik W."/>
            <person name="Walter J."/>
        </authorList>
    </citation>
    <scope>PARTIAL NUCLEOTIDE SEQUENCE (ISOFORM II)</scope>
    <scope>TISSUE SPECIFICITY</scope>
    <source>
        <strain>C57BL/6J</strain>
    </source>
</reference>
<reference key="6">
    <citation type="journal article" date="2000" name="J. Clin. Invest.">
        <title>Targeted disruption of the Kvlqt1 gene causes deafness and gastric hyperplasia in mice.</title>
        <authorList>
            <person name="Lee M.P."/>
            <person name="Ravenel J.D."/>
            <person name="Hu R.J."/>
            <person name="Lustig L.R."/>
            <person name="Tomaselli G."/>
            <person name="Berger R.D."/>
            <person name="Brandenburg S.A."/>
            <person name="Litzi T.J."/>
            <person name="Bunton T.E."/>
            <person name="Limb C."/>
            <person name="Francis H."/>
            <person name="Gorelikow M."/>
            <person name="Gu H."/>
            <person name="Washington K."/>
            <person name="Argani P."/>
            <person name="Goldenring J.R."/>
            <person name="Coffey R.J."/>
            <person name="Feinberg A.P."/>
        </authorList>
    </citation>
    <scope>DISRUPTION PHENOTYPE</scope>
    <scope>FUNCTION</scope>
</reference>
<reference key="7">
    <citation type="journal article" date="2005" name="Proc. Natl. Acad. Sci. U.S.A.">
        <title>KCNQ1-dependent transport in renal and gastrointestinal epithelia.</title>
        <authorList>
            <person name="Vallon V."/>
            <person name="Grahammer F."/>
            <person name="Volkl H."/>
            <person name="Sandu C.D."/>
            <person name="Richter K."/>
            <person name="Rexhepaj R."/>
            <person name="Gerlach U."/>
            <person name="Rong Q."/>
            <person name="Pfeifer K."/>
            <person name="Lang F."/>
        </authorList>
    </citation>
    <scope>DISRUPTION PHENOTYPE</scope>
    <scope>FUNCTION</scope>
</reference>
<reference key="8">
    <citation type="journal article" date="2007" name="Biochem. Biophys. Res. Commun.">
        <title>Kcnq1 contributes to an adrenergic-sensitive steady-state K+ current in mouse heart.</title>
        <authorList>
            <person name="Knollmann B.C."/>
            <person name="Sirenko S."/>
            <person name="Rong Q."/>
            <person name="Katchman A.N."/>
            <person name="Casimiro M."/>
            <person name="Pfeifer K."/>
            <person name="Ebert S.N."/>
        </authorList>
    </citation>
    <scope>FUNCTION</scope>
</reference>
<reference key="9">
    <citation type="journal article" date="2009" name="J. Physiol. (Lond.)">
        <title>KCNQ1 is the luminal K+ recycling channel during stimulation of gastric acid secretion.</title>
        <authorList>
            <person name="Song P."/>
            <person name="Groos S."/>
            <person name="Riederer B."/>
            <person name="Feng Z."/>
            <person name="Krabbenhoeft A."/>
            <person name="Smolka A."/>
            <person name="Seidler U."/>
        </authorList>
    </citation>
    <scope>DISRUPTION PHENOTYPE</scope>
    <scope>FUNCTION</scope>
</reference>
<reference key="10">
    <citation type="journal article" date="2010" name="Cell">
        <title>A tissue-specific atlas of mouse protein phosphorylation and expression.</title>
        <authorList>
            <person name="Huttlin E.L."/>
            <person name="Jedrychowski M.P."/>
            <person name="Elias J.E."/>
            <person name="Goswami T."/>
            <person name="Rad R."/>
            <person name="Beausoleil S.A."/>
            <person name="Villen J."/>
            <person name="Haas W."/>
            <person name="Sowa M.E."/>
            <person name="Gygi S.P."/>
        </authorList>
    </citation>
    <scope>PHOSPHORYLATION [LARGE SCALE ANALYSIS] AT SER-406 AND SER-408</scope>
    <scope>IDENTIFICATION BY MASS SPECTROMETRY [LARGE SCALE ANALYSIS]</scope>
    <source>
        <tissue>Heart</tissue>
        <tissue>Kidney</tissue>
        <tissue>Pancreas</tissue>
    </source>
</reference>
<reference key="11">
    <citation type="journal article" date="2014" name="Sci. Signal.">
        <title>KCNQ1, KCNE2, and Na+-coupled solute transporters form reciprocally regulating complexes that affect neuronal excitability.</title>
        <authorList>
            <person name="Abbott G.W."/>
            <person name="Tai K.K."/>
            <person name="Neverisky D.L."/>
            <person name="Hansler A."/>
            <person name="Hu Z."/>
            <person name="Roepke T.K."/>
            <person name="Lerner D.J."/>
            <person name="Chen Q."/>
            <person name="Liu L."/>
            <person name="Zupan B."/>
            <person name="Toth M."/>
            <person name="Haynes R."/>
            <person name="Huang X."/>
            <person name="Demirbas D."/>
            <person name="Buccafusca R."/>
            <person name="Gross S.S."/>
            <person name="Kanda V.A."/>
            <person name="Berry G.T."/>
        </authorList>
    </citation>
    <scope>FUNCTION</scope>
    <scope>SUBCELLULAR LOCATION</scope>
    <scope>INTERACTION WITH SLC5A3</scope>
    <scope>TISSUE SPECIFICITY</scope>
</reference>
<accession>P97414</accession>
<accession>O88702</accession>
<accession>Q3U4H1</accession>
<accession>Q7TNZ1</accession>
<accession>Q7TPL7</accession>
<accession>Q80VR7</accession>
<evidence type="ECO:0000250" key="1">
    <source>
        <dbReference type="UniProtKB" id="P51787"/>
    </source>
</evidence>
<evidence type="ECO:0000250" key="2">
    <source>
        <dbReference type="UniProtKB" id="Q9Z0N7"/>
    </source>
</evidence>
<evidence type="ECO:0000255" key="3"/>
<evidence type="ECO:0000269" key="4">
    <source>
    </source>
</evidence>
<evidence type="ECO:0000269" key="5">
    <source>
    </source>
</evidence>
<evidence type="ECO:0000269" key="6">
    <source>
    </source>
</evidence>
<evidence type="ECO:0000269" key="7">
    <source>
    </source>
</evidence>
<evidence type="ECO:0000269" key="8">
    <source>
    </source>
</evidence>
<evidence type="ECO:0000269" key="9">
    <source>
    </source>
</evidence>
<evidence type="ECO:0000269" key="10">
    <source>
    </source>
</evidence>
<evidence type="ECO:0000269" key="11">
    <source>
    </source>
</evidence>
<evidence type="ECO:0000303" key="12">
    <source>
    </source>
</evidence>
<evidence type="ECO:0000305" key="13"/>
<evidence type="ECO:0000305" key="14">
    <source>
    </source>
</evidence>
<evidence type="ECO:0000312" key="15">
    <source>
        <dbReference type="MGI" id="MGI:108083"/>
    </source>
</evidence>
<evidence type="ECO:0007744" key="16">
    <source>
    </source>
</evidence>